<keyword id="KW-0963">Cytoplasm</keyword>
<keyword id="KW-0378">Hydrolase</keyword>
<keyword id="KW-0540">Nuclease</keyword>
<keyword id="KW-0690">Ribosome biogenesis</keyword>
<dbReference type="EC" id="3.1.-.-" evidence="1"/>
<dbReference type="EMBL" id="AE017243">
    <property type="protein sequence ID" value="AAZ44289.2"/>
    <property type="molecule type" value="Genomic_DNA"/>
</dbReference>
<dbReference type="SMR" id="Q4AAD2"/>
<dbReference type="GeneID" id="41334500"/>
<dbReference type="KEGG" id="mhj:MHJ_0198"/>
<dbReference type="eggNOG" id="COG0816">
    <property type="taxonomic scope" value="Bacteria"/>
</dbReference>
<dbReference type="HOGENOM" id="CLU_098240_2_2_14"/>
<dbReference type="OrthoDB" id="9796140at2"/>
<dbReference type="Proteomes" id="UP000000548">
    <property type="component" value="Chromosome"/>
</dbReference>
<dbReference type="GO" id="GO:0005829">
    <property type="term" value="C:cytosol"/>
    <property type="evidence" value="ECO:0007669"/>
    <property type="project" value="TreeGrafter"/>
</dbReference>
<dbReference type="GO" id="GO:0004518">
    <property type="term" value="F:nuclease activity"/>
    <property type="evidence" value="ECO:0007669"/>
    <property type="project" value="UniProtKB-KW"/>
</dbReference>
<dbReference type="GO" id="GO:0000967">
    <property type="term" value="P:rRNA 5'-end processing"/>
    <property type="evidence" value="ECO:0007669"/>
    <property type="project" value="UniProtKB-UniRule"/>
</dbReference>
<dbReference type="CDD" id="cd16964">
    <property type="entry name" value="YqgF"/>
    <property type="match status" value="1"/>
</dbReference>
<dbReference type="Gene3D" id="3.30.420.140">
    <property type="entry name" value="YqgF/RNase H-like domain"/>
    <property type="match status" value="1"/>
</dbReference>
<dbReference type="HAMAP" id="MF_00651">
    <property type="entry name" value="Nuclease_YqgF"/>
    <property type="match status" value="1"/>
</dbReference>
<dbReference type="InterPro" id="IPR012337">
    <property type="entry name" value="RNaseH-like_sf"/>
</dbReference>
<dbReference type="InterPro" id="IPR005227">
    <property type="entry name" value="YqgF"/>
</dbReference>
<dbReference type="InterPro" id="IPR006641">
    <property type="entry name" value="YqgF/RNaseH-like_dom"/>
</dbReference>
<dbReference type="InterPro" id="IPR037027">
    <property type="entry name" value="YqgF/RNaseH-like_dom_sf"/>
</dbReference>
<dbReference type="NCBIfam" id="TIGR00250">
    <property type="entry name" value="RNAse_H_YqgF"/>
    <property type="match status" value="1"/>
</dbReference>
<dbReference type="PANTHER" id="PTHR33317">
    <property type="entry name" value="POLYNUCLEOTIDYL TRANSFERASE, RIBONUCLEASE H-LIKE SUPERFAMILY PROTEIN"/>
    <property type="match status" value="1"/>
</dbReference>
<dbReference type="PANTHER" id="PTHR33317:SF4">
    <property type="entry name" value="POLYNUCLEOTIDYL TRANSFERASE, RIBONUCLEASE H-LIKE SUPERFAMILY PROTEIN"/>
    <property type="match status" value="1"/>
</dbReference>
<dbReference type="Pfam" id="PF03652">
    <property type="entry name" value="RuvX"/>
    <property type="match status" value="1"/>
</dbReference>
<dbReference type="SMART" id="SM00732">
    <property type="entry name" value="YqgFc"/>
    <property type="match status" value="1"/>
</dbReference>
<dbReference type="SUPFAM" id="SSF53098">
    <property type="entry name" value="Ribonuclease H-like"/>
    <property type="match status" value="1"/>
</dbReference>
<accession>Q4AAD2</accession>
<evidence type="ECO:0000255" key="1">
    <source>
        <dbReference type="HAMAP-Rule" id="MF_00651"/>
    </source>
</evidence>
<sequence>MGKYNRILALDLGIKTCGFAISDQNWKISYPLEQFNFNRYDFASVISRIAFWMKEYPISILVLGYPLTLAGKISPRTKMVEYFADLVKKNYEIKVVFQDERLTTKQAQTFLLDLGISFKKRQKVIDKLAAQIILERFLNTKKG</sequence>
<name>YQGF_MESHJ</name>
<proteinExistence type="inferred from homology"/>
<comment type="function">
    <text evidence="1">Could be a nuclease involved in processing of the 5'-end of pre-16S rRNA.</text>
</comment>
<comment type="subcellular location">
    <subcellularLocation>
        <location evidence="1">Cytoplasm</location>
    </subcellularLocation>
</comment>
<comment type="similarity">
    <text evidence="1">Belongs to the YqgF nuclease family.</text>
</comment>
<feature type="chain" id="PRO_0000257552" description="Putative pre-16S rRNA nuclease">
    <location>
        <begin position="1"/>
        <end position="143"/>
    </location>
</feature>
<protein>
    <recommendedName>
        <fullName evidence="1">Putative pre-16S rRNA nuclease</fullName>
        <ecNumber evidence="1">3.1.-.-</ecNumber>
    </recommendedName>
</protein>
<gene>
    <name type="ordered locus">MHJ_0198</name>
</gene>
<organism>
    <name type="scientific">Mesomycoplasma hyopneumoniae (strain J / ATCC 25934 / NCTC 10110)</name>
    <name type="common">Mycoplasma hyopneumoniae</name>
    <dbReference type="NCBI Taxonomy" id="262719"/>
    <lineage>
        <taxon>Bacteria</taxon>
        <taxon>Bacillati</taxon>
        <taxon>Mycoplasmatota</taxon>
        <taxon>Mycoplasmoidales</taxon>
        <taxon>Metamycoplasmataceae</taxon>
        <taxon>Mesomycoplasma</taxon>
    </lineage>
</organism>
<reference key="1">
    <citation type="journal article" date="2005" name="J. Bacteriol.">
        <title>Swine and poultry pathogens: the complete genome sequences of two strains of Mycoplasma hyopneumoniae and a strain of Mycoplasma synoviae.</title>
        <authorList>
            <person name="Vasconcelos A.T.R."/>
            <person name="Ferreira H.B."/>
            <person name="Bizarro C.V."/>
            <person name="Bonatto S.L."/>
            <person name="Carvalho M.O."/>
            <person name="Pinto P.M."/>
            <person name="Almeida D.F."/>
            <person name="Almeida L.G.P."/>
            <person name="Almeida R."/>
            <person name="Alves-Junior L."/>
            <person name="Assuncao E.N."/>
            <person name="Azevedo V.A.C."/>
            <person name="Bogo M.R."/>
            <person name="Brigido M.M."/>
            <person name="Brocchi M."/>
            <person name="Burity H.A."/>
            <person name="Camargo A.A."/>
            <person name="Camargo S.S."/>
            <person name="Carepo M.S."/>
            <person name="Carraro D.M."/>
            <person name="de Mattos Cascardo J.C."/>
            <person name="Castro L.A."/>
            <person name="Cavalcanti G."/>
            <person name="Chemale G."/>
            <person name="Collevatti R.G."/>
            <person name="Cunha C.W."/>
            <person name="Dallagiovanna B."/>
            <person name="Dambros B.P."/>
            <person name="Dellagostin O.A."/>
            <person name="Falcao C."/>
            <person name="Fantinatti-Garboggini F."/>
            <person name="Felipe M.S.S."/>
            <person name="Fiorentin L."/>
            <person name="Franco G.R."/>
            <person name="Freitas N.S.A."/>
            <person name="Frias D."/>
            <person name="Grangeiro T.B."/>
            <person name="Grisard E.C."/>
            <person name="Guimaraes C.T."/>
            <person name="Hungria M."/>
            <person name="Jardim S.N."/>
            <person name="Krieger M.A."/>
            <person name="Laurino J.P."/>
            <person name="Lima L.F.A."/>
            <person name="Lopes M.I."/>
            <person name="Loreto E.L.S."/>
            <person name="Madeira H.M.F."/>
            <person name="Manfio G.P."/>
            <person name="Maranhao A.Q."/>
            <person name="Martinkovics C.T."/>
            <person name="Medeiros S.R.B."/>
            <person name="Moreira M.A.M."/>
            <person name="Neiva M."/>
            <person name="Ramalho-Neto C.E."/>
            <person name="Nicolas M.F."/>
            <person name="Oliveira S.C."/>
            <person name="Paixao R.F.C."/>
            <person name="Pedrosa F.O."/>
            <person name="Pena S.D.J."/>
            <person name="Pereira M."/>
            <person name="Pereira-Ferrari L."/>
            <person name="Piffer I."/>
            <person name="Pinto L.S."/>
            <person name="Potrich D.P."/>
            <person name="Salim A.C.M."/>
            <person name="Santos F.R."/>
            <person name="Schmitt R."/>
            <person name="Schneider M.P.C."/>
            <person name="Schrank A."/>
            <person name="Schrank I.S."/>
            <person name="Schuck A.F."/>
            <person name="Seuanez H.N."/>
            <person name="Silva D.W."/>
            <person name="Silva R."/>
            <person name="Silva S.C."/>
            <person name="Soares C.M.A."/>
            <person name="Souza K.R.L."/>
            <person name="Souza R.C."/>
            <person name="Staats C.C."/>
            <person name="Steffens M.B.R."/>
            <person name="Teixeira S.M.R."/>
            <person name="Urmenyi T.P."/>
            <person name="Vainstein M.H."/>
            <person name="Zuccherato L.W."/>
            <person name="Simpson A.J.G."/>
            <person name="Zaha A."/>
        </authorList>
    </citation>
    <scope>NUCLEOTIDE SEQUENCE [LARGE SCALE GENOMIC DNA]</scope>
    <source>
        <strain>J / ATCC 25934 / NCTC 10110</strain>
    </source>
</reference>